<dbReference type="EMBL" id="EQ999977">
    <property type="protein sequence ID" value="EEQ90142.1"/>
    <property type="molecule type" value="Genomic_DNA"/>
</dbReference>
<dbReference type="STRING" id="559297.C5GLN0"/>
<dbReference type="VEuPathDB" id="FungiDB:BDCG_05262"/>
<dbReference type="eggNOG" id="KOG3190">
    <property type="taxonomic scope" value="Eukaryota"/>
</dbReference>
<dbReference type="HOGENOM" id="CLU_048802_0_0_1"/>
<dbReference type="OMA" id="ERKEMPW"/>
<dbReference type="GO" id="GO:0030686">
    <property type="term" value="C:90S preribosome"/>
    <property type="evidence" value="ECO:0007669"/>
    <property type="project" value="TreeGrafter"/>
</dbReference>
<dbReference type="GO" id="GO:0005730">
    <property type="term" value="C:nucleolus"/>
    <property type="evidence" value="ECO:0007669"/>
    <property type="project" value="UniProtKB-SubCell"/>
</dbReference>
<dbReference type="GO" id="GO:0000462">
    <property type="term" value="P:maturation of SSU-rRNA from tricistronic rRNA transcript (SSU-rRNA, 5.8S rRNA, LSU-rRNA)"/>
    <property type="evidence" value="ECO:0007669"/>
    <property type="project" value="TreeGrafter"/>
</dbReference>
<dbReference type="InterPro" id="IPR009292">
    <property type="entry name" value="RRP36"/>
</dbReference>
<dbReference type="PANTHER" id="PTHR21738">
    <property type="entry name" value="RIBOSOMAL RNA PROCESSING PROTEIN 36 HOMOLOG"/>
    <property type="match status" value="1"/>
</dbReference>
<dbReference type="PANTHER" id="PTHR21738:SF0">
    <property type="entry name" value="RIBOSOMAL RNA PROCESSING PROTEIN 36 HOMOLOG"/>
    <property type="match status" value="1"/>
</dbReference>
<dbReference type="Pfam" id="PF06102">
    <property type="entry name" value="RRP36"/>
    <property type="match status" value="1"/>
</dbReference>
<name>RRP36_AJEDR</name>
<comment type="function">
    <text evidence="1">Component of the 90S pre-ribosome involved in the maturation of rRNAs. Required for early cleavages of the pre-RNAs in the 40S ribosomal subunit maturation pathway (By similarity).</text>
</comment>
<comment type="subunit">
    <text evidence="1">Associates with 90S and pre-40S pre-ribosomal particles.</text>
</comment>
<comment type="subcellular location">
    <subcellularLocation>
        <location evidence="1">Nucleus</location>
        <location evidence="1">Nucleolus</location>
    </subcellularLocation>
</comment>
<comment type="similarity">
    <text evidence="4">Belongs to the RRP36 family.</text>
</comment>
<gene>
    <name type="primary">RRP36</name>
    <name type="ORF">BDCG_05262</name>
</gene>
<reference key="1">
    <citation type="journal article" date="2015" name="PLoS Genet.">
        <title>The dynamic genome and transcriptome of the human fungal pathogen Blastomyces and close relative Emmonsia.</title>
        <authorList>
            <person name="Munoz J.F."/>
            <person name="Gauthier G.M."/>
            <person name="Desjardins C.A."/>
            <person name="Gallo J.E."/>
            <person name="Holder J."/>
            <person name="Sullivan T.D."/>
            <person name="Marty A.J."/>
            <person name="Carmen J.C."/>
            <person name="Chen Z."/>
            <person name="Ding L."/>
            <person name="Gujja S."/>
            <person name="Magrini V."/>
            <person name="Misas E."/>
            <person name="Mitreva M."/>
            <person name="Priest M."/>
            <person name="Saif S."/>
            <person name="Whiston E.A."/>
            <person name="Young S."/>
            <person name="Zeng Q."/>
            <person name="Goldman W.E."/>
            <person name="Mardis E.R."/>
            <person name="Taylor J.W."/>
            <person name="McEwen J.G."/>
            <person name="Clay O.K."/>
            <person name="Klein B.S."/>
            <person name="Cuomo C.A."/>
        </authorList>
    </citation>
    <scope>NUCLEOTIDE SEQUENCE [LARGE SCALE GENOMIC DNA]</scope>
    <source>
        <strain>ER-3 / ATCC MYA-2586</strain>
    </source>
</reference>
<organism>
    <name type="scientific">Ajellomyces dermatitidis (strain ER-3 / ATCC MYA-2586)</name>
    <name type="common">Blastomyces dermatitidis</name>
    <dbReference type="NCBI Taxonomy" id="559297"/>
    <lineage>
        <taxon>Eukaryota</taxon>
        <taxon>Fungi</taxon>
        <taxon>Dikarya</taxon>
        <taxon>Ascomycota</taxon>
        <taxon>Pezizomycotina</taxon>
        <taxon>Eurotiomycetes</taxon>
        <taxon>Eurotiomycetidae</taxon>
        <taxon>Onygenales</taxon>
        <taxon>Ajellomycetaceae</taxon>
        <taxon>Blastomyces</taxon>
    </lineage>
</organism>
<evidence type="ECO:0000250" key="1"/>
<evidence type="ECO:0000255" key="2"/>
<evidence type="ECO:0000256" key="3">
    <source>
        <dbReference type="SAM" id="MobiDB-lite"/>
    </source>
</evidence>
<evidence type="ECO:0000305" key="4"/>
<proteinExistence type="inferred from homology"/>
<accession>C5GLN0</accession>
<protein>
    <recommendedName>
        <fullName>rRNA biogenesis protein RRP36</fullName>
    </recommendedName>
    <alternativeName>
        <fullName>Ribosomal RNA-processing protein 36</fullName>
    </alternativeName>
</protein>
<keyword id="KW-0175">Coiled coil</keyword>
<keyword id="KW-0539">Nucleus</keyword>
<keyword id="KW-0687">Ribonucleoprotein</keyword>
<keyword id="KW-0690">Ribosome biogenesis</keyword>
<keyword id="KW-0698">rRNA processing</keyword>
<feature type="chain" id="PRO_0000397610" description="rRNA biogenesis protein RRP36">
    <location>
        <begin position="1"/>
        <end position="356"/>
    </location>
</feature>
<feature type="region of interest" description="Disordered" evidence="3">
    <location>
        <begin position="1"/>
        <end position="216"/>
    </location>
</feature>
<feature type="region of interest" description="Disordered" evidence="3">
    <location>
        <begin position="322"/>
        <end position="356"/>
    </location>
</feature>
<feature type="coiled-coil region" evidence="2">
    <location>
        <begin position="230"/>
        <end position="278"/>
    </location>
</feature>
<feature type="compositionally biased region" description="Acidic residues" evidence="3">
    <location>
        <begin position="28"/>
        <end position="75"/>
    </location>
</feature>
<feature type="compositionally biased region" description="Basic residues" evidence="3">
    <location>
        <begin position="154"/>
        <end position="164"/>
    </location>
</feature>
<feature type="compositionally biased region" description="Low complexity" evidence="3">
    <location>
        <begin position="202"/>
        <end position="216"/>
    </location>
</feature>
<feature type="compositionally biased region" description="Basic and acidic residues" evidence="3">
    <location>
        <begin position="322"/>
        <end position="333"/>
    </location>
</feature>
<feature type="compositionally biased region" description="Basic and acidic residues" evidence="3">
    <location>
        <begin position="341"/>
        <end position="356"/>
    </location>
</feature>
<sequence length="356" mass="40485">MPISSKFNQRVRARLEEDEFEQFSGESTSDEGLEGGESVEDEEEQEENSAEDHSEEDDDEGEEDDDDDGDVEDSSSDINPSLNAISFGALAKAQASLGKRKRPTASTGGISPKRAKVPGRHSPTPSASSSGEKQEPEPELSEYQKHLAANAKKPPQKLTHRTSKHAPTIQSSRHAVSRKRTILEPPPVPKARDPRFDSVVLSHSTNGNSSTASNAAIHARKNYAFLDSYRKDEIAQLRKQVSTLQTKKHKTNYDERELARLKRQITSMSDRQRTFERKEMEREVLVQHRRKERELIREGKKSQPYFLKRGEVKKEAVAKRFTEMSGKEKQRALERRRKKVAGKERKEMPWGRRVVE</sequence>